<name>GVPJ_PSEGP</name>
<gene>
    <name evidence="3" type="primary">gvpJ</name>
</gene>
<keyword id="KW-0304">Gas vesicle</keyword>
<accession>Q9AKS3</accession>
<comment type="function">
    <text evidence="1 2">A minor component of the gas vesicle, might be involved in nucleating gas vesicle formation (By similarity). Gas vesicles (GV) are hollow, gas filled proteinaceous nanostructures. During planktonic growth they allow positioning of the organism at a favorable depth for light or nutrient acquisition (By similarity).</text>
</comment>
<comment type="subunit">
    <text evidence="1">Interacts with GvpA.</text>
</comment>
<comment type="subcellular location">
    <subcellularLocation>
        <location evidence="1">Gas vesicle</location>
    </subcellularLocation>
</comment>
<comment type="similarity">
    <text evidence="4">Belongs to the gas vesicle GvpA family.</text>
</comment>
<reference key="1">
    <citation type="submission" date="2001-02" db="EMBL/GenBank/DDBJ databases">
        <authorList>
            <person name="Tandeau de Marsac N."/>
        </authorList>
    </citation>
    <scope>NUCLEOTIDE SEQUENCE [GENOMIC DNA]</scope>
</reference>
<feature type="chain" id="PRO_0000199999" description="Gas vesicle protein J">
    <location>
        <begin position="1"/>
        <end position="126"/>
    </location>
</feature>
<dbReference type="EMBL" id="X57731">
    <property type="protein sequence ID" value="CAC32465.1"/>
    <property type="molecule type" value="Genomic_DNA"/>
</dbReference>
<dbReference type="SMR" id="Q9AKS3"/>
<dbReference type="GO" id="GO:0031411">
    <property type="term" value="C:gas vesicle"/>
    <property type="evidence" value="ECO:0007669"/>
    <property type="project" value="UniProtKB-SubCell"/>
</dbReference>
<dbReference type="GO" id="GO:0012506">
    <property type="term" value="C:vesicle membrane"/>
    <property type="evidence" value="ECO:0007669"/>
    <property type="project" value="InterPro"/>
</dbReference>
<dbReference type="GO" id="GO:0005198">
    <property type="term" value="F:structural molecule activity"/>
    <property type="evidence" value="ECO:0007669"/>
    <property type="project" value="InterPro"/>
</dbReference>
<dbReference type="InterPro" id="IPR000638">
    <property type="entry name" value="Gas-vesicle_GvpA-like"/>
</dbReference>
<dbReference type="InterPro" id="IPR050530">
    <property type="entry name" value="GvpA"/>
</dbReference>
<dbReference type="InterPro" id="IPR018493">
    <property type="entry name" value="GvpA-like_CS"/>
</dbReference>
<dbReference type="PANTHER" id="PTHR35344:SF4">
    <property type="entry name" value="GAS VESICLE PROTEIN A1"/>
    <property type="match status" value="1"/>
</dbReference>
<dbReference type="PANTHER" id="PTHR35344">
    <property type="entry name" value="GAS VESICLE STRUCTURAL PROTEIN 2-RELATED"/>
    <property type="match status" value="1"/>
</dbReference>
<dbReference type="Pfam" id="PF00741">
    <property type="entry name" value="Gas_vesicle"/>
    <property type="match status" value="1"/>
</dbReference>
<dbReference type="PROSITE" id="PS00234">
    <property type="entry name" value="GAS_VESICLE_A_1"/>
    <property type="match status" value="1"/>
</dbReference>
<dbReference type="PROSITE" id="PS00669">
    <property type="entry name" value="GAS_VESICLE_A_2"/>
    <property type="match status" value="1"/>
</dbReference>
<organism>
    <name type="scientific">Pseudanabaena galeata (strain PCC 6901)</name>
    <dbReference type="NCBI Taxonomy" id="47918"/>
    <lineage>
        <taxon>Bacteria</taxon>
        <taxon>Bacillati</taxon>
        <taxon>Cyanobacteriota</taxon>
        <taxon>Cyanophyceae</taxon>
        <taxon>Pseudanabaenales</taxon>
        <taxon>Pseudanabaenaceae</taxon>
        <taxon>Pseudanabaena</taxon>
    </lineage>
</organism>
<protein>
    <recommendedName>
        <fullName>Gas vesicle protein J</fullName>
        <shortName>GvpJ</shortName>
    </recommendedName>
</protein>
<proteinExistence type="inferred from homology"/>
<sequence length="126" mass="13857">MSQALRPQAIKTSTTGSSLADILERVLDKGIVIAGDITVSVGSVELLSIRIRLLVASVDKAKEIGINWWESDPYLSSRTQELLASNQQLLERVNLLERELAATKATGVIKKGVLGTPFFIWFYDLV</sequence>
<evidence type="ECO:0000250" key="1">
    <source>
        <dbReference type="UniProtKB" id="P24374"/>
    </source>
</evidence>
<evidence type="ECO:0000250" key="2">
    <source>
        <dbReference type="UniProtKB" id="P55147"/>
    </source>
</evidence>
<evidence type="ECO:0000303" key="3">
    <source ref="1"/>
</evidence>
<evidence type="ECO:0000305" key="4"/>